<accession>P83706</accession>
<protein>
    <recommendedName>
        <fullName>Halocidin subunit B</fullName>
    </recommendedName>
</protein>
<feature type="peptide" id="PRO_0000044145" description="Halocidin subunit B">
    <location>
        <begin position="1"/>
        <end position="15"/>
    </location>
</feature>
<feature type="modified residue" description="Alanine amide" evidence="1">
    <location>
        <position position="15"/>
    </location>
</feature>
<feature type="disulfide bond" description="Interchain (with C-12 in subunit A)">
    <location>
        <position position="9"/>
    </location>
</feature>
<dbReference type="GO" id="GO:0005576">
    <property type="term" value="C:extracellular region"/>
    <property type="evidence" value="ECO:0000305"/>
    <property type="project" value="UniProtKB"/>
</dbReference>
<dbReference type="GO" id="GO:0042742">
    <property type="term" value="P:defense response to bacterium"/>
    <property type="evidence" value="ECO:0000314"/>
    <property type="project" value="UniProtKB"/>
</dbReference>
<dbReference type="InterPro" id="IPR012516">
    <property type="entry name" value="Antimicrobial13"/>
</dbReference>
<dbReference type="Pfam" id="PF08108">
    <property type="entry name" value="Antimicrobial13"/>
    <property type="match status" value="1"/>
</dbReference>
<comment type="function">
    <text evidence="1 2">Antimicrobial activity against S.aureus and P.aeruginosa, possibly by attacking the bacterial cell membrane.</text>
</comment>
<comment type="subunit">
    <text evidence="1">Heterodimer with subunit A; disulfide-linked.</text>
</comment>
<comment type="subcellular location">
    <subcellularLocation>
        <location>Secreted</location>
    </subcellularLocation>
</comment>
<comment type="mass spectrometry"/>
<evidence type="ECO:0000269" key="1">
    <source>
    </source>
</evidence>
<evidence type="ECO:0000303" key="2">
    <source>
    </source>
</evidence>
<evidence type="ECO:0000305" key="3"/>
<organism evidence="3">
    <name type="scientific">Halocynthia aurantium</name>
    <name type="common">Sea peach</name>
    <dbReference type="NCBI Taxonomy" id="254849"/>
    <lineage>
        <taxon>Eukaryota</taxon>
        <taxon>Metazoa</taxon>
        <taxon>Chordata</taxon>
        <taxon>Tunicata</taxon>
        <taxon>Ascidiacea</taxon>
        <taxon>Stolidobranchia</taxon>
        <taxon>Pyuridae</taxon>
        <taxon>Halocynthia</taxon>
    </lineage>
</organism>
<sequence>ALLHHGLNCAKGVLA</sequence>
<proteinExistence type="evidence at protein level"/>
<keyword id="KW-0027">Amidation</keyword>
<keyword id="KW-0044">Antibiotic</keyword>
<keyword id="KW-0929">Antimicrobial</keyword>
<keyword id="KW-0903">Direct protein sequencing</keyword>
<keyword id="KW-1015">Disulfide bond</keyword>
<keyword id="KW-0964">Secreted</keyword>
<reference evidence="3" key="1">
    <citation type="journal article" date="2002" name="FEBS Lett.">
        <title>Halocidin: a new antimicrobial peptide from hemocytes of the solitary tunicate, Halocynthia aurantium.</title>
        <authorList>
            <person name="Jang W.S."/>
            <person name="Kim K.N."/>
            <person name="Lee Y.S."/>
            <person name="Nam M.H."/>
            <person name="Lee I.H."/>
        </authorList>
    </citation>
    <scope>PROTEIN SEQUENCE</scope>
    <scope>SYNTHESIS</scope>
    <scope>FUNCTION</scope>
    <scope>SUBUNIT</scope>
    <scope>AMIDATION AT ALA-15</scope>
    <scope>MASS SPECTROMETRY</scope>
    <source>
        <tissue evidence="1">Hemocyte</tissue>
    </source>
</reference>
<name>HLOB_HALAU</name>